<dbReference type="EMBL" id="X74328">
    <property type="protein sequence ID" value="CAA52376.1"/>
    <property type="molecule type" value="mRNA"/>
</dbReference>
<dbReference type="EMBL" id="EU517121">
    <property type="protein sequence ID" value="ACD31539.1"/>
    <property type="molecule type" value="mRNA"/>
</dbReference>
<dbReference type="EMBL" id="AJ430063">
    <property type="protein sequence ID" value="CAD22548.1"/>
    <property type="molecule type" value="mRNA"/>
</dbReference>
<dbReference type="EMBL" id="AJ430064">
    <property type="protein sequence ID" value="CAD22549.1"/>
    <property type="molecule type" value="Genomic_DNA"/>
</dbReference>
<dbReference type="EMBL" id="AY242132">
    <property type="protein sequence ID" value="AAO92299.1"/>
    <property type="molecule type" value="Genomic_DNA"/>
</dbReference>
<dbReference type="EMBL" id="AM156854">
    <property type="protein sequence ID" value="CAJ42137.1"/>
    <property type="molecule type" value="mRNA"/>
</dbReference>
<dbReference type="EMBL" id="AM156855">
    <property type="protein sequence ID" value="CAJ42138.1"/>
    <property type="molecule type" value="mRNA"/>
</dbReference>
<dbReference type="EMBL" id="AM156856">
    <property type="protein sequence ID" value="CAJ42139.1"/>
    <property type="molecule type" value="mRNA"/>
</dbReference>
<dbReference type="EMBL" id="AL590609">
    <property type="status" value="NOT_ANNOTATED_CDS"/>
    <property type="molecule type" value="Genomic_DNA"/>
</dbReference>
<dbReference type="EMBL" id="CH471134">
    <property type="protein sequence ID" value="EAW95099.1"/>
    <property type="molecule type" value="Genomic_DNA"/>
</dbReference>
<dbReference type="EMBL" id="BC069722">
    <property type="protein sequence ID" value="AAH69722.1"/>
    <property type="molecule type" value="mRNA"/>
</dbReference>
<dbReference type="EMBL" id="BC074767">
    <property type="protein sequence ID" value="AAH74767.1"/>
    <property type="molecule type" value="mRNA"/>
</dbReference>
<dbReference type="EMBL" id="BC095545">
    <property type="protein sequence ID" value="AAH95545.1"/>
    <property type="molecule type" value="mRNA"/>
</dbReference>
<dbReference type="CCDS" id="CCDS245.1"/>
<dbReference type="PIR" id="S36750">
    <property type="entry name" value="S36750"/>
</dbReference>
<dbReference type="RefSeq" id="NP_001832.1">
    <property type="nucleotide sequence ID" value="NM_001841.3"/>
</dbReference>
<dbReference type="RefSeq" id="XP_011538931.1">
    <property type="nucleotide sequence ID" value="XM_011540629.4"/>
</dbReference>
<dbReference type="RefSeq" id="XP_016855750.1">
    <property type="nucleotide sequence ID" value="XM_017000261.3"/>
</dbReference>
<dbReference type="RefSeq" id="XP_047300789.1">
    <property type="nucleotide sequence ID" value="XM_047444833.1"/>
</dbReference>
<dbReference type="PDB" id="2KI9">
    <property type="method" value="NMR"/>
    <property type="chains" value="A=240-272"/>
</dbReference>
<dbReference type="PDB" id="5ZTY">
    <property type="method" value="X-ray"/>
    <property type="resolution" value="2.80 A"/>
    <property type="chains" value="A=21-222, A=235-325"/>
</dbReference>
<dbReference type="PDB" id="6KPC">
    <property type="method" value="X-ray"/>
    <property type="resolution" value="3.20 A"/>
    <property type="chains" value="A=21-222, A=235-325"/>
</dbReference>
<dbReference type="PDB" id="6KPF">
    <property type="method" value="EM"/>
    <property type="resolution" value="2.90 A"/>
    <property type="chains" value="R=1-360"/>
</dbReference>
<dbReference type="PDB" id="6PT0">
    <property type="method" value="EM"/>
    <property type="resolution" value="3.20 A"/>
    <property type="chains" value="R=1-360"/>
</dbReference>
<dbReference type="PDB" id="8GUQ">
    <property type="method" value="EM"/>
    <property type="resolution" value="3.08 A"/>
    <property type="chains" value="R=1-360"/>
</dbReference>
<dbReference type="PDB" id="8GUR">
    <property type="method" value="EM"/>
    <property type="resolution" value="2.84 A"/>
    <property type="chains" value="R=1-360"/>
</dbReference>
<dbReference type="PDB" id="8GUS">
    <property type="method" value="EM"/>
    <property type="resolution" value="2.97 A"/>
    <property type="chains" value="R=1-360"/>
</dbReference>
<dbReference type="PDB" id="8GUT">
    <property type="method" value="EM"/>
    <property type="resolution" value="2.98 A"/>
    <property type="chains" value="R=21-360"/>
</dbReference>
<dbReference type="PDB" id="8X3L">
    <property type="method" value="EM"/>
    <property type="resolution" value="3.13 A"/>
    <property type="chains" value="R=1-319"/>
</dbReference>
<dbReference type="PDBsum" id="2KI9"/>
<dbReference type="PDBsum" id="5ZTY"/>
<dbReference type="PDBsum" id="6KPC"/>
<dbReference type="PDBsum" id="6KPF"/>
<dbReference type="PDBsum" id="6PT0"/>
<dbReference type="PDBsum" id="8GUQ"/>
<dbReference type="PDBsum" id="8GUR"/>
<dbReference type="PDBsum" id="8GUS"/>
<dbReference type="PDBsum" id="8GUT"/>
<dbReference type="PDBsum" id="8X3L"/>
<dbReference type="BMRB" id="P34972"/>
<dbReference type="EMDB" id="EMD-0744"/>
<dbReference type="EMDB" id="EMD-20470"/>
<dbReference type="EMDB" id="EMD-34276"/>
<dbReference type="EMDB" id="EMD-34277"/>
<dbReference type="EMDB" id="EMD-34278"/>
<dbReference type="EMDB" id="EMD-34279"/>
<dbReference type="EMDB" id="EMD-38039"/>
<dbReference type="SMR" id="P34972"/>
<dbReference type="BioGRID" id="107669">
    <property type="interactions" value="107"/>
</dbReference>
<dbReference type="CORUM" id="P34972"/>
<dbReference type="FunCoup" id="P34972">
    <property type="interactions" value="750"/>
</dbReference>
<dbReference type="IntAct" id="P34972">
    <property type="interactions" value="112"/>
</dbReference>
<dbReference type="MINT" id="P34972"/>
<dbReference type="STRING" id="9606.ENSP00000363596"/>
<dbReference type="BindingDB" id="P34972"/>
<dbReference type="ChEMBL" id="CHEMBL253"/>
<dbReference type="DrugBank" id="DB09061">
    <property type="generic name" value="Cannabidiol"/>
</dbReference>
<dbReference type="DrugBank" id="DB16854">
    <property type="generic name" value="Caryophyllene"/>
</dbReference>
<dbReference type="DrugBank" id="DB00470">
    <property type="generic name" value="Dronabinol"/>
</dbReference>
<dbReference type="DrugBank" id="DB11903">
    <property type="generic name" value="GW842166"/>
</dbReference>
<dbReference type="DrugBank" id="DB06202">
    <property type="generic name" value="Lasofoxifene"/>
</dbReference>
<dbReference type="DrugBank" id="DB14009">
    <property type="generic name" value="Medical Cannabis"/>
</dbReference>
<dbReference type="DrugBank" id="DB00486">
    <property type="generic name" value="Nabilone"/>
</dbReference>
<dbReference type="DrugBank" id="DB14011">
    <property type="generic name" value="Nabiximols"/>
</dbReference>
<dbReference type="DrugBank" id="DB14998">
    <property type="generic name" value="Olorinab"/>
</dbReference>
<dbReference type="DrugBank" id="DB14043">
    <property type="generic name" value="Palmidrol"/>
</dbReference>
<dbReference type="DrugBank" id="DB02955">
    <property type="generic name" value="Ricinoleic acid"/>
</dbReference>
<dbReference type="DrugBank" id="DB16321">
    <property type="generic name" value="S-777469"/>
</dbReference>
<dbReference type="DrugBank" id="DB11755">
    <property type="generic name" value="Tetrahydrocannabivarin"/>
</dbReference>
<dbReference type="DrugBank" id="DB13950">
    <property type="generic name" value="WIN 55212-2"/>
</dbReference>
<dbReference type="DrugCentral" id="P34972"/>
<dbReference type="GuidetoPHARMACOLOGY" id="57"/>
<dbReference type="SwissLipids" id="SLP:000001608"/>
<dbReference type="TCDB" id="9.A.14.2.6">
    <property type="family name" value="the g-protein-coupled receptor (gpcr) family"/>
</dbReference>
<dbReference type="GlyCosmos" id="P34972">
    <property type="glycosylation" value="1 site, No reported glycans"/>
</dbReference>
<dbReference type="GlyGen" id="P34972">
    <property type="glycosylation" value="1 site"/>
</dbReference>
<dbReference type="iPTMnet" id="P34972"/>
<dbReference type="PhosphoSitePlus" id="P34972"/>
<dbReference type="SwissPalm" id="P34972"/>
<dbReference type="BioMuta" id="CNR2"/>
<dbReference type="DMDM" id="461697"/>
<dbReference type="MassIVE" id="P34972"/>
<dbReference type="PaxDb" id="9606-ENSP00000363596"/>
<dbReference type="PeptideAtlas" id="P34972"/>
<dbReference type="ProteomicsDB" id="54964"/>
<dbReference type="Antibodypedia" id="4047">
    <property type="antibodies" value="503 antibodies from 41 providers"/>
</dbReference>
<dbReference type="DNASU" id="1269"/>
<dbReference type="Ensembl" id="ENST00000374472.5">
    <property type="protein sequence ID" value="ENSP00000363596.4"/>
    <property type="gene ID" value="ENSG00000188822.8"/>
</dbReference>
<dbReference type="GeneID" id="1269"/>
<dbReference type="KEGG" id="hsa:1269"/>
<dbReference type="MANE-Select" id="ENST00000374472.5">
    <property type="protein sequence ID" value="ENSP00000363596.4"/>
    <property type="RefSeq nucleotide sequence ID" value="NM_001841.3"/>
    <property type="RefSeq protein sequence ID" value="NP_001832.1"/>
</dbReference>
<dbReference type="UCSC" id="uc001bif.4">
    <property type="organism name" value="human"/>
</dbReference>
<dbReference type="AGR" id="HGNC:2160"/>
<dbReference type="CTD" id="1269"/>
<dbReference type="DisGeNET" id="1269"/>
<dbReference type="GeneCards" id="CNR2"/>
<dbReference type="HGNC" id="HGNC:2160">
    <property type="gene designation" value="CNR2"/>
</dbReference>
<dbReference type="HPA" id="ENSG00000188822">
    <property type="expression patterns" value="Tissue enhanced (intestine, lymphoid tissue)"/>
</dbReference>
<dbReference type="MIM" id="605051">
    <property type="type" value="gene"/>
</dbReference>
<dbReference type="neXtProt" id="NX_P34972"/>
<dbReference type="OpenTargets" id="ENSG00000188822"/>
<dbReference type="PharmGKB" id="PA26682"/>
<dbReference type="VEuPathDB" id="HostDB:ENSG00000188822"/>
<dbReference type="eggNOG" id="KOG3656">
    <property type="taxonomic scope" value="Eukaryota"/>
</dbReference>
<dbReference type="GeneTree" id="ENSGT01120000271819"/>
<dbReference type="HOGENOM" id="CLU_009579_7_0_1"/>
<dbReference type="InParanoid" id="P34972"/>
<dbReference type="OMA" id="AFDRYIC"/>
<dbReference type="OrthoDB" id="5966748at2759"/>
<dbReference type="PAN-GO" id="P34972">
    <property type="GO annotations" value="6 GO annotations based on evolutionary models"/>
</dbReference>
<dbReference type="PhylomeDB" id="P34972"/>
<dbReference type="TreeFam" id="TF330052"/>
<dbReference type="PathwayCommons" id="P34972"/>
<dbReference type="Reactome" id="R-HSA-373076">
    <property type="pathway name" value="Class A/1 (Rhodopsin-like receptors)"/>
</dbReference>
<dbReference type="Reactome" id="R-HSA-418594">
    <property type="pathway name" value="G alpha (i) signalling events"/>
</dbReference>
<dbReference type="SignaLink" id="P34972"/>
<dbReference type="SIGNOR" id="P34972"/>
<dbReference type="BioGRID-ORCS" id="1269">
    <property type="hits" value="10 hits in 1161 CRISPR screens"/>
</dbReference>
<dbReference type="ChiTaRS" id="CNR2">
    <property type="organism name" value="human"/>
</dbReference>
<dbReference type="EvolutionaryTrace" id="P34972"/>
<dbReference type="GeneWiki" id="Cannabinoid_receptor_type_2"/>
<dbReference type="GenomeRNAi" id="1269"/>
<dbReference type="Pharos" id="P34972">
    <property type="development level" value="Tchem"/>
</dbReference>
<dbReference type="PRO" id="PR:P34972"/>
<dbReference type="Proteomes" id="UP000005640">
    <property type="component" value="Chromosome 1"/>
</dbReference>
<dbReference type="RNAct" id="P34972">
    <property type="molecule type" value="protein"/>
</dbReference>
<dbReference type="Bgee" id="ENSG00000188822">
    <property type="expression patterns" value="Expressed in spleen and 42 other cell types or tissues"/>
</dbReference>
<dbReference type="ExpressionAtlas" id="P34972">
    <property type="expression patterns" value="baseline and differential"/>
</dbReference>
<dbReference type="GO" id="GO:0005737">
    <property type="term" value="C:cytoplasm"/>
    <property type="evidence" value="ECO:0000318"/>
    <property type="project" value="GO_Central"/>
</dbReference>
<dbReference type="GO" id="GO:0030425">
    <property type="term" value="C:dendrite"/>
    <property type="evidence" value="ECO:0007669"/>
    <property type="project" value="UniProtKB-SubCell"/>
</dbReference>
<dbReference type="GO" id="GO:0005783">
    <property type="term" value="C:endoplasmic reticulum"/>
    <property type="evidence" value="ECO:0000314"/>
    <property type="project" value="CACAO"/>
</dbReference>
<dbReference type="GO" id="GO:0031234">
    <property type="term" value="C:extrinsic component of cytoplasmic side of plasma membrane"/>
    <property type="evidence" value="ECO:0007669"/>
    <property type="project" value="Ensembl"/>
</dbReference>
<dbReference type="GO" id="GO:0043204">
    <property type="term" value="C:perikaryon"/>
    <property type="evidence" value="ECO:0007669"/>
    <property type="project" value="UniProtKB-SubCell"/>
</dbReference>
<dbReference type="GO" id="GO:0005886">
    <property type="term" value="C:plasma membrane"/>
    <property type="evidence" value="ECO:0000318"/>
    <property type="project" value="GO_Central"/>
</dbReference>
<dbReference type="GO" id="GO:0045211">
    <property type="term" value="C:postsynaptic membrane"/>
    <property type="evidence" value="ECO:0007669"/>
    <property type="project" value="Ensembl"/>
</dbReference>
<dbReference type="GO" id="GO:0004949">
    <property type="term" value="F:cannabinoid receptor activity"/>
    <property type="evidence" value="ECO:0000318"/>
    <property type="project" value="GO_Central"/>
</dbReference>
<dbReference type="GO" id="GO:0007189">
    <property type="term" value="P:adenylate cyclase-activating G protein-coupled receptor signaling pathway"/>
    <property type="evidence" value="ECO:0000318"/>
    <property type="project" value="GO_Central"/>
</dbReference>
<dbReference type="GO" id="GO:0007187">
    <property type="term" value="P:G protein-coupled receptor signaling pathway, coupled to cyclic nucleotide second messenger"/>
    <property type="evidence" value="ECO:0000304"/>
    <property type="project" value="ProtInc"/>
</dbReference>
<dbReference type="GO" id="GO:0006955">
    <property type="term" value="P:immune response"/>
    <property type="evidence" value="ECO:0000304"/>
    <property type="project" value="ProtInc"/>
</dbReference>
<dbReference type="GO" id="GO:0006954">
    <property type="term" value="P:inflammatory response"/>
    <property type="evidence" value="ECO:0007669"/>
    <property type="project" value="UniProtKB-KW"/>
</dbReference>
<dbReference type="GO" id="GO:0030595">
    <property type="term" value="P:leukocyte chemotaxis"/>
    <property type="evidence" value="ECO:0007669"/>
    <property type="project" value="Ensembl"/>
</dbReference>
<dbReference type="GO" id="GO:0045759">
    <property type="term" value="P:negative regulation of action potential"/>
    <property type="evidence" value="ECO:0007669"/>
    <property type="project" value="Ensembl"/>
</dbReference>
<dbReference type="GO" id="GO:0033004">
    <property type="term" value="P:negative regulation of mast cell activation"/>
    <property type="evidence" value="ECO:0007669"/>
    <property type="project" value="Ensembl"/>
</dbReference>
<dbReference type="GO" id="GO:0032229">
    <property type="term" value="P:negative regulation of synaptic transmission, GABAergic"/>
    <property type="evidence" value="ECO:0007669"/>
    <property type="project" value="Ensembl"/>
</dbReference>
<dbReference type="GO" id="GO:0019222">
    <property type="term" value="P:regulation of metabolic process"/>
    <property type="evidence" value="ECO:0000318"/>
    <property type="project" value="GO_Central"/>
</dbReference>
<dbReference type="GO" id="GO:0001975">
    <property type="term" value="P:response to amphetamine"/>
    <property type="evidence" value="ECO:0007669"/>
    <property type="project" value="Ensembl"/>
</dbReference>
<dbReference type="GO" id="GO:0032496">
    <property type="term" value="P:response to lipopolysaccharide"/>
    <property type="evidence" value="ECO:0007669"/>
    <property type="project" value="Ensembl"/>
</dbReference>
<dbReference type="GO" id="GO:0099553">
    <property type="term" value="P:trans-synaptic signaling by endocannabinoid, modulating synaptic transmission"/>
    <property type="evidence" value="ECO:0007669"/>
    <property type="project" value="Ensembl"/>
</dbReference>
<dbReference type="CDD" id="cd15341">
    <property type="entry name" value="7tmA_CB2"/>
    <property type="match status" value="1"/>
</dbReference>
<dbReference type="FunFam" id="1.20.1070.10:FF:000072">
    <property type="entry name" value="Cannabinoid receptor 1"/>
    <property type="match status" value="1"/>
</dbReference>
<dbReference type="Gene3D" id="1.20.1070.10">
    <property type="entry name" value="Rhodopsin 7-helix transmembrane proteins"/>
    <property type="match status" value="1"/>
</dbReference>
<dbReference type="InterPro" id="IPR001551">
    <property type="entry name" value="Canbinoid_rcpt_2"/>
</dbReference>
<dbReference type="InterPro" id="IPR002230">
    <property type="entry name" value="Cnbnoid_rcpt"/>
</dbReference>
<dbReference type="InterPro" id="IPR000276">
    <property type="entry name" value="GPCR_Rhodpsn"/>
</dbReference>
<dbReference type="InterPro" id="IPR017452">
    <property type="entry name" value="GPCR_Rhodpsn_7TM"/>
</dbReference>
<dbReference type="PANTHER" id="PTHR22750">
    <property type="entry name" value="G-PROTEIN COUPLED RECEPTOR"/>
    <property type="match status" value="1"/>
</dbReference>
<dbReference type="Pfam" id="PF00001">
    <property type="entry name" value="7tm_1"/>
    <property type="match status" value="1"/>
</dbReference>
<dbReference type="PRINTS" id="PR00523">
    <property type="entry name" value="CANABINOID2R"/>
</dbReference>
<dbReference type="PRINTS" id="PR00362">
    <property type="entry name" value="CANNABINOIDR"/>
</dbReference>
<dbReference type="PRINTS" id="PR00237">
    <property type="entry name" value="GPCRRHODOPSN"/>
</dbReference>
<dbReference type="SMART" id="SM01381">
    <property type="entry name" value="7TM_GPCR_Srsx"/>
    <property type="match status" value="1"/>
</dbReference>
<dbReference type="SUPFAM" id="SSF81321">
    <property type="entry name" value="Family A G protein-coupled receptor-like"/>
    <property type="match status" value="1"/>
</dbReference>
<dbReference type="PROSITE" id="PS00237">
    <property type="entry name" value="G_PROTEIN_RECEP_F1_1"/>
    <property type="match status" value="1"/>
</dbReference>
<dbReference type="PROSITE" id="PS50262">
    <property type="entry name" value="G_PROTEIN_RECEP_F1_2"/>
    <property type="match status" value="1"/>
</dbReference>
<organism>
    <name type="scientific">Homo sapiens</name>
    <name type="common">Human</name>
    <dbReference type="NCBI Taxonomy" id="9606"/>
    <lineage>
        <taxon>Eukaryota</taxon>
        <taxon>Metazoa</taxon>
        <taxon>Chordata</taxon>
        <taxon>Craniata</taxon>
        <taxon>Vertebrata</taxon>
        <taxon>Euteleostomi</taxon>
        <taxon>Mammalia</taxon>
        <taxon>Eutheria</taxon>
        <taxon>Euarchontoglires</taxon>
        <taxon>Primates</taxon>
        <taxon>Haplorrhini</taxon>
        <taxon>Catarrhini</taxon>
        <taxon>Hominidae</taxon>
        <taxon>Homo</taxon>
    </lineage>
</organism>
<gene>
    <name type="primary">CNR2</name>
    <name type="synonym">CB2A</name>
    <name type="synonym">CB2B</name>
</gene>
<name>CNR2_HUMAN</name>
<sequence>MEECWVTEIANGSKDGLDSNPMKDYMILSGPQKTAVAVLCTLLGLLSALENVAVLYLILSSHQLRRKPSYLFIGSLAGADFLASVVFACSFVNFHVFHGVDSKAVFLLKIGSVTMTFTASVGSLLLTAIDRYLCLRYPPSYKALLTRGRALVTLGIMWVLSALVSYLPLMGWTCCPRPCSELFPLIPNDYLLSWLLFIAFLFSGIIYTYGHVLWKAHQHVASLSGHQDRQVPGMARMRLDVRLAKTLGLVLAVLLICWFPVLALMAHSLATTLSDQVKKAFAFCSMLCLINSMVNPVIYALRSGEIRSSAHHCLAHWKKCVRGLGSEAKEEAPRSSVTETEADGKITPWPDSRDLDLSDC</sequence>
<comment type="function">
    <text evidence="6 11 12 17">Heterotrimeric G protein-coupled receptor for endocannabinoid 2-arachidonoylglycerol mediating inhibition of adenylate cyclase. May function in inflammatory response, nociceptive transmission and bone homeostasis.</text>
</comment>
<comment type="interaction">
    <interactant intactId="EBI-2835940">
        <id>P34972</id>
    </interactant>
    <interactant intactId="EBI-12046857">
        <id>Q9UKJ8</id>
        <label>ADAM21</label>
    </interactant>
    <organismsDiffer>false</organismsDiffer>
    <experiments>3</experiments>
</comment>
<comment type="interaction">
    <interactant intactId="EBI-2835940">
        <id>P34972</id>
    </interactant>
    <interactant intactId="EBI-10827839">
        <id>Q15848</id>
        <label>ADIPOQ</label>
    </interactant>
    <organismsDiffer>false</organismsDiffer>
    <experiments>3</experiments>
</comment>
<comment type="interaction">
    <interactant intactId="EBI-2835940">
        <id>P34972</id>
    </interactant>
    <interactant intactId="EBI-1754287">
        <id>Q9NRZ5</id>
        <label>AGPAT4</label>
    </interactant>
    <organismsDiffer>false</organismsDiffer>
    <experiments>3</experiments>
</comment>
<comment type="interaction">
    <interactant intactId="EBI-2835940">
        <id>P34972</id>
    </interactant>
    <interactant intactId="EBI-2873970">
        <id>P13236</id>
        <label>CCL4</label>
    </interactant>
    <organismsDiffer>false</organismsDiffer>
    <experiments>3</experiments>
</comment>
<comment type="interaction">
    <interactant intactId="EBI-2835940">
        <id>P34972</id>
    </interactant>
    <interactant intactId="EBI-372265">
        <id>P21964</id>
        <label>COMT</label>
    </interactant>
    <organismsDiffer>false</organismsDiffer>
    <experiments>3</experiments>
</comment>
<comment type="interaction">
    <interactant intactId="EBI-2835940">
        <id>P34972</id>
    </interactant>
    <interactant intactId="EBI-12175685">
        <id>Q14802-3</id>
        <label>FXYD3</label>
    </interactant>
    <organismsDiffer>false</organismsDiffer>
    <experiments>3</experiments>
</comment>
<comment type="interaction">
    <interactant intactId="EBI-2835940">
        <id>P34972</id>
    </interactant>
    <interactant intactId="EBI-17937277">
        <id>Q8N387</id>
        <label>MUC15</label>
    </interactant>
    <organismsDiffer>false</organismsDiffer>
    <experiments>3</experiments>
</comment>
<comment type="interaction">
    <interactant intactId="EBI-2835940">
        <id>P34972</id>
    </interactant>
    <interactant intactId="EBI-10262547">
        <id>Q8IXM6</id>
        <label>NRM</label>
    </interactant>
    <organismsDiffer>false</organismsDiffer>
    <experiments>3</experiments>
</comment>
<comment type="interaction">
    <interactant intactId="EBI-2835940">
        <id>P34972</id>
    </interactant>
    <interactant intactId="EBI-12213001">
        <id>I3L0A0</id>
        <label>PEDS1-UBE2V1</label>
    </interactant>
    <organismsDiffer>false</organismsDiffer>
    <experiments>3</experiments>
</comment>
<comment type="interaction">
    <interactant intactId="EBI-2835940">
        <id>P34972</id>
    </interactant>
    <interactant intactId="EBI-6269616">
        <id>Q96AA3</id>
        <label>RFT1</label>
    </interactant>
    <organismsDiffer>false</organismsDiffer>
    <experiments>3</experiments>
</comment>
<comment type="interaction">
    <interactant intactId="EBI-2835940">
        <id>P34972</id>
    </interactant>
    <interactant intactId="EBI-9679163">
        <id>Q9Y6D0</id>
        <label>SELENOK</label>
    </interactant>
    <organismsDiffer>false</organismsDiffer>
    <experiments>3</experiments>
</comment>
<comment type="interaction">
    <interactant intactId="EBI-2835940">
        <id>P34972</id>
    </interactant>
    <interactant intactId="EBI-12867720">
        <id>Q6ICL7</id>
        <label>SLC35E4</label>
    </interactant>
    <organismsDiffer>false</organismsDiffer>
    <experiments>3</experiments>
</comment>
<comment type="interaction">
    <interactant intactId="EBI-2835940">
        <id>P34972</id>
    </interactant>
    <interactant intactId="EBI-12898013">
        <id>Q9NP94</id>
        <label>SLC39A2</label>
    </interactant>
    <organismsDiffer>false</organismsDiffer>
    <experiments>3</experiments>
</comment>
<comment type="interaction">
    <interactant intactId="EBI-2835940">
        <id>P34972</id>
    </interactant>
    <interactant intactId="EBI-307104">
        <id>Q13501</id>
        <label>SQSTM1</label>
    </interactant>
    <organismsDiffer>false</organismsDiffer>
    <experiments>5</experiments>
</comment>
<comment type="interaction">
    <interactant intactId="EBI-2835940">
        <id>P34972</id>
    </interactant>
    <interactant intactId="EBI-741829">
        <id>Q96HH6</id>
        <label>TMEM19</label>
    </interactant>
    <organismsDiffer>false</organismsDiffer>
    <experiments>3</experiments>
</comment>
<comment type="interaction">
    <interactant intactId="EBI-2835940">
        <id>P34972</id>
    </interactant>
    <interactant intactId="EBI-12274070">
        <id>Q969S6</id>
        <label>TMEM203</label>
    </interactant>
    <organismsDiffer>false</organismsDiffer>
    <experiments>3</experiments>
</comment>
<comment type="interaction">
    <interactant intactId="EBI-2835940">
        <id>P34972</id>
    </interactant>
    <interactant intactId="EBI-10315004">
        <id>Q9NWH2</id>
        <label>TMEM242</label>
    </interactant>
    <organismsDiffer>false</organismsDiffer>
    <experiments>3</experiments>
</comment>
<comment type="interaction">
    <interactant intactId="EBI-2835940">
        <id>P34972</id>
    </interactant>
    <interactant intactId="EBI-2852148">
        <id>Q9H2L4</id>
        <label>TMEM60</label>
    </interactant>
    <organismsDiffer>false</organismsDiffer>
    <experiments>3</experiments>
</comment>
<comment type="interaction">
    <interactant intactId="EBI-2835940">
        <id>P34972</id>
    </interactant>
    <interactant intactId="EBI-12015604">
        <id>Q8N2M4</id>
        <label>TMEM86A</label>
    </interactant>
    <organismsDiffer>false</organismsDiffer>
    <experiments>3</experiments>
</comment>
<comment type="interaction">
    <interactant intactId="EBI-2835940">
        <id>P34972</id>
    </interactant>
    <interactant intactId="EBI-11724433">
        <id>Q6ZT21</id>
        <label>TMPPE</label>
    </interactant>
    <organismsDiffer>false</organismsDiffer>
    <experiments>3</experiments>
</comment>
<comment type="interaction">
    <interactant intactId="EBI-2835940">
        <id>P34972</id>
    </interactant>
    <interactant intactId="EBI-12195249">
        <id>Q5TGU0</id>
        <label>TSPO2</label>
    </interactant>
    <organismsDiffer>false</organismsDiffer>
    <experiments>3</experiments>
</comment>
<comment type="interaction">
    <interactant intactId="EBI-2835940">
        <id>P34972</id>
    </interactant>
    <interactant intactId="EBI-7850136">
        <id>Q9Y548</id>
        <label>YIPF1</label>
    </interactant>
    <organismsDiffer>false</organismsDiffer>
    <experiments>3</experiments>
</comment>
<comment type="interaction">
    <interactant intactId="EBI-2835940">
        <id>P34972</id>
    </interactant>
    <interactant intactId="EBI-751253">
        <id>Q9BSR8</id>
        <label>YIPF4</label>
    </interactant>
    <organismsDiffer>false</organismsDiffer>
    <experiments>3</experiments>
</comment>
<comment type="interaction">
    <interactant intactId="EBI-2835940">
        <id>P34972</id>
    </interactant>
    <interactant intactId="EBI-751210">
        <id>Q96EC8</id>
        <label>YIPF6</label>
    </interactant>
    <organismsDiffer>false</organismsDiffer>
    <experiments>3</experiments>
</comment>
<comment type="subcellular location">
    <subcellularLocation>
        <location>Cell membrane</location>
        <topology>Multi-pass membrane protein</topology>
    </subcellularLocation>
    <subcellularLocation>
        <location evidence="1">Cell projection</location>
        <location evidence="1">Dendrite</location>
    </subcellularLocation>
    <subcellularLocation>
        <location evidence="1">Perikaryon</location>
    </subcellularLocation>
    <text evidence="1">Localizes to apical dendrite of pyramidal neurons.</text>
</comment>
<comment type="tissue specificity">
    <text evidence="8 10 13 14 17 18 20">Preferentially expressed in cells of the immune system with higher expression in B-cells and NK cells (at protein level). Expressed in skin in suprabasal layers and hair follicles (at protein level). Highly expressed in tonsil and to a lower extent in spleen, peripheral blood mononuclear cells, and thymus. PubMed:14657172 could not detect expression in normal brain. Expressed in brain by perivascular microglial cells and dorsal root ganglion sensory neurons (at protein level). Two isoforms are produced by alternative promoter usage and differ only in the 5' UTR: isoform CB2A is observed predominantly in testis with some expression in brain, while isoform CB2B is predominant in spleen and leukocytes.</text>
</comment>
<comment type="induction">
    <text evidence="19">In macrophages, down-regulated by endocannabinoid anandamide/AEA.</text>
</comment>
<comment type="PTM">
    <text evidence="7">Constitutively phosphorylated on Ser-352; phosphorylation increases cell internalization and desensitizes the receptor.</text>
</comment>
<comment type="similarity">
    <text evidence="4">Belongs to the G-protein coupled receptor 1 family.</text>
</comment>
<accession>P34972</accession>
<accession>C6ES44</accession>
<accession>Q4VBK8</accession>
<accession>Q5JRH7</accession>
<accession>Q6B0G7</accession>
<accession>Q6NSY0</accession>
<protein>
    <recommendedName>
        <fullName>Cannabinoid receptor 2</fullName>
        <shortName>CB-2</shortName>
        <shortName>CB2</shortName>
        <shortName>hCB2</shortName>
    </recommendedName>
    <alternativeName>
        <fullName>CX5</fullName>
    </alternativeName>
</protein>
<reference key="1">
    <citation type="journal article" date="1993" name="Nature">
        <title>Molecular characterization of a peripheral receptor for cannabinoids.</title>
        <authorList>
            <person name="Munro S."/>
            <person name="Thomas K.L."/>
            <person name="Abu-Shaar M."/>
        </authorList>
    </citation>
    <scope>NUCLEOTIDE SEQUENCE [MRNA]</scope>
</reference>
<reference key="2">
    <citation type="journal article" date="2009" name="Genes Brain Behav.">
        <title>Species differences in cannabinoid receptor 2 (CNR2 gene): identification of novel human and rodent CB2 isoforms, differential tissue expression and regulation by cannabinoid receptor ligands.</title>
        <authorList>
            <person name="Liu Q.-R."/>
            <person name="Pan C.H."/>
            <person name="Hishimoto A."/>
            <person name="Li C.Y."/>
            <person name="Xi Z.X."/>
            <person name="Llorente-Berzal A."/>
            <person name="Viveros M.P."/>
            <person name="Ishiguro H."/>
            <person name="Arinami T."/>
            <person name="Onaivi E.S."/>
            <person name="Uhl G.R."/>
        </authorList>
    </citation>
    <scope>NUCLEOTIDE SEQUENCE [MRNA]</scope>
    <scope>TISSUE SPECIFICITY</scope>
    <source>
        <tissue>Spleen</tissue>
    </source>
</reference>
<reference key="3">
    <citation type="submission" date="2003-02" db="EMBL/GenBank/DDBJ databases">
        <title>Cannabinoid receptors and their genes.</title>
        <authorList>
            <person name="Bruess M."/>
            <person name="Boenisch H."/>
        </authorList>
    </citation>
    <scope>NUCLEOTIDE SEQUENCE [GENOMIC DNA / MRNA]</scope>
    <source>
        <tissue>Blood</tissue>
    </source>
</reference>
<reference key="4">
    <citation type="submission" date="2003-02" db="EMBL/GenBank/DDBJ databases">
        <title>Isolation of complete coding sequence for cannabinoid receptor 2 (CNR2).</title>
        <authorList>
            <person name="Warren C.N."/>
            <person name="Aronstam R.S."/>
            <person name="Sharma S.V."/>
        </authorList>
    </citation>
    <scope>NUCLEOTIDE SEQUENCE [GENOMIC DNA]</scope>
</reference>
<reference key="5">
    <citation type="submission" date="2005-11" db="EMBL/GenBank/DDBJ databases">
        <title>Amplification and cloning of human cannabinoid receptor 2 gene from Asiatic origin.</title>
        <authorList>
            <person name="Saravanan T."/>
            <person name="Chugh A."/>
            <person name="Kant R."/>
        </authorList>
    </citation>
    <scope>NUCLEOTIDE SEQUENCE [MRNA]</scope>
    <scope>VARIANT TYR-316</scope>
    <source>
        <tissue>Blood</tissue>
    </source>
</reference>
<reference key="6">
    <citation type="journal article" date="2006" name="Nature">
        <title>The DNA sequence and biological annotation of human chromosome 1.</title>
        <authorList>
            <person name="Gregory S.G."/>
            <person name="Barlow K.F."/>
            <person name="McLay K.E."/>
            <person name="Kaul R."/>
            <person name="Swarbreck D."/>
            <person name="Dunham A."/>
            <person name="Scott C.E."/>
            <person name="Howe K.L."/>
            <person name="Woodfine K."/>
            <person name="Spencer C.C.A."/>
            <person name="Jones M.C."/>
            <person name="Gillson C."/>
            <person name="Searle S."/>
            <person name="Zhou Y."/>
            <person name="Kokocinski F."/>
            <person name="McDonald L."/>
            <person name="Evans R."/>
            <person name="Phillips K."/>
            <person name="Atkinson A."/>
            <person name="Cooper R."/>
            <person name="Jones C."/>
            <person name="Hall R.E."/>
            <person name="Andrews T.D."/>
            <person name="Lloyd C."/>
            <person name="Ainscough R."/>
            <person name="Almeida J.P."/>
            <person name="Ambrose K.D."/>
            <person name="Anderson F."/>
            <person name="Andrew R.W."/>
            <person name="Ashwell R.I.S."/>
            <person name="Aubin K."/>
            <person name="Babbage A.K."/>
            <person name="Bagguley C.L."/>
            <person name="Bailey J."/>
            <person name="Beasley H."/>
            <person name="Bethel G."/>
            <person name="Bird C.P."/>
            <person name="Bray-Allen S."/>
            <person name="Brown J.Y."/>
            <person name="Brown A.J."/>
            <person name="Buckley D."/>
            <person name="Burton J."/>
            <person name="Bye J."/>
            <person name="Carder C."/>
            <person name="Chapman J.C."/>
            <person name="Clark S.Y."/>
            <person name="Clarke G."/>
            <person name="Clee C."/>
            <person name="Cobley V."/>
            <person name="Collier R.E."/>
            <person name="Corby N."/>
            <person name="Coville G.J."/>
            <person name="Davies J."/>
            <person name="Deadman R."/>
            <person name="Dunn M."/>
            <person name="Earthrowl M."/>
            <person name="Ellington A.G."/>
            <person name="Errington H."/>
            <person name="Frankish A."/>
            <person name="Frankland J."/>
            <person name="French L."/>
            <person name="Garner P."/>
            <person name="Garnett J."/>
            <person name="Gay L."/>
            <person name="Ghori M.R.J."/>
            <person name="Gibson R."/>
            <person name="Gilby L.M."/>
            <person name="Gillett W."/>
            <person name="Glithero R.J."/>
            <person name="Grafham D.V."/>
            <person name="Griffiths C."/>
            <person name="Griffiths-Jones S."/>
            <person name="Grocock R."/>
            <person name="Hammond S."/>
            <person name="Harrison E.S.I."/>
            <person name="Hart E."/>
            <person name="Haugen E."/>
            <person name="Heath P.D."/>
            <person name="Holmes S."/>
            <person name="Holt K."/>
            <person name="Howden P.J."/>
            <person name="Hunt A.R."/>
            <person name="Hunt S.E."/>
            <person name="Hunter G."/>
            <person name="Isherwood J."/>
            <person name="James R."/>
            <person name="Johnson C."/>
            <person name="Johnson D."/>
            <person name="Joy A."/>
            <person name="Kay M."/>
            <person name="Kershaw J.K."/>
            <person name="Kibukawa M."/>
            <person name="Kimberley A.M."/>
            <person name="King A."/>
            <person name="Knights A.J."/>
            <person name="Lad H."/>
            <person name="Laird G."/>
            <person name="Lawlor S."/>
            <person name="Leongamornlert D.A."/>
            <person name="Lloyd D.M."/>
            <person name="Loveland J."/>
            <person name="Lovell J."/>
            <person name="Lush M.J."/>
            <person name="Lyne R."/>
            <person name="Martin S."/>
            <person name="Mashreghi-Mohammadi M."/>
            <person name="Matthews L."/>
            <person name="Matthews N.S.W."/>
            <person name="McLaren S."/>
            <person name="Milne S."/>
            <person name="Mistry S."/>
            <person name="Moore M.J.F."/>
            <person name="Nickerson T."/>
            <person name="O'Dell C.N."/>
            <person name="Oliver K."/>
            <person name="Palmeiri A."/>
            <person name="Palmer S.A."/>
            <person name="Parker A."/>
            <person name="Patel D."/>
            <person name="Pearce A.V."/>
            <person name="Peck A.I."/>
            <person name="Pelan S."/>
            <person name="Phelps K."/>
            <person name="Phillimore B.J."/>
            <person name="Plumb R."/>
            <person name="Rajan J."/>
            <person name="Raymond C."/>
            <person name="Rouse G."/>
            <person name="Saenphimmachak C."/>
            <person name="Sehra H.K."/>
            <person name="Sheridan E."/>
            <person name="Shownkeen R."/>
            <person name="Sims S."/>
            <person name="Skuce C.D."/>
            <person name="Smith M."/>
            <person name="Steward C."/>
            <person name="Subramanian S."/>
            <person name="Sycamore N."/>
            <person name="Tracey A."/>
            <person name="Tromans A."/>
            <person name="Van Helmond Z."/>
            <person name="Wall M."/>
            <person name="Wallis J.M."/>
            <person name="White S."/>
            <person name="Whitehead S.L."/>
            <person name="Wilkinson J.E."/>
            <person name="Willey D.L."/>
            <person name="Williams H."/>
            <person name="Wilming L."/>
            <person name="Wray P.W."/>
            <person name="Wu Z."/>
            <person name="Coulson A."/>
            <person name="Vaudin M."/>
            <person name="Sulston J.E."/>
            <person name="Durbin R.M."/>
            <person name="Hubbard T."/>
            <person name="Wooster R."/>
            <person name="Dunham I."/>
            <person name="Carter N.P."/>
            <person name="McVean G."/>
            <person name="Ross M.T."/>
            <person name="Harrow J."/>
            <person name="Olson M.V."/>
            <person name="Beck S."/>
            <person name="Rogers J."/>
            <person name="Bentley D.R."/>
        </authorList>
    </citation>
    <scope>NUCLEOTIDE SEQUENCE [LARGE SCALE GENOMIC DNA]</scope>
</reference>
<reference key="7">
    <citation type="submission" date="2005-07" db="EMBL/GenBank/DDBJ databases">
        <authorList>
            <person name="Mural R.J."/>
            <person name="Istrail S."/>
            <person name="Sutton G.G."/>
            <person name="Florea L."/>
            <person name="Halpern A.L."/>
            <person name="Mobarry C.M."/>
            <person name="Lippert R."/>
            <person name="Walenz B."/>
            <person name="Shatkay H."/>
            <person name="Dew I."/>
            <person name="Miller J.R."/>
            <person name="Flanigan M.J."/>
            <person name="Edwards N.J."/>
            <person name="Bolanos R."/>
            <person name="Fasulo D."/>
            <person name="Halldorsson B.V."/>
            <person name="Hannenhalli S."/>
            <person name="Turner R."/>
            <person name="Yooseph S."/>
            <person name="Lu F."/>
            <person name="Nusskern D.R."/>
            <person name="Shue B.C."/>
            <person name="Zheng X.H."/>
            <person name="Zhong F."/>
            <person name="Delcher A.L."/>
            <person name="Huson D.H."/>
            <person name="Kravitz S.A."/>
            <person name="Mouchard L."/>
            <person name="Reinert K."/>
            <person name="Remington K.A."/>
            <person name="Clark A.G."/>
            <person name="Waterman M.S."/>
            <person name="Eichler E.E."/>
            <person name="Adams M.D."/>
            <person name="Hunkapiller M.W."/>
            <person name="Myers E.W."/>
            <person name="Venter J.C."/>
        </authorList>
    </citation>
    <scope>NUCLEOTIDE SEQUENCE [LARGE SCALE GENOMIC DNA]</scope>
</reference>
<reference key="8">
    <citation type="journal article" date="2004" name="Genome Res.">
        <title>The status, quality, and expansion of the NIH full-length cDNA project: the Mammalian Gene Collection (MGC).</title>
        <authorList>
            <consortium name="The MGC Project Team"/>
        </authorList>
    </citation>
    <scope>NUCLEOTIDE SEQUENCE [LARGE SCALE MRNA]</scope>
    <scope>VARIANTS ARG-63 AND TYR-316</scope>
    <source>
        <tissue>Brain</tissue>
    </source>
</reference>
<reference key="9">
    <citation type="journal article" date="1995" name="Eur. J. Biochem.">
        <title>Expression of central and peripheral cannabinoid receptors in human immune tissues and leukocyte subpopulations.</title>
        <authorList>
            <person name="Galiegue S."/>
            <person name="Mary S."/>
            <person name="Marchand J."/>
            <person name="Dussossoy D."/>
            <person name="Carriere D."/>
            <person name="Carayon P."/>
            <person name="Bouaboula M."/>
            <person name="Shire D."/>
            <person name="Le Fur G."/>
            <person name="Casellas P."/>
        </authorList>
    </citation>
    <scope>TISSUE SPECIFICITY</scope>
</reference>
<reference key="10">
    <citation type="journal article" date="1999" name="J. Biol. Chem.">
        <title>Regulation of peripheral cannabinoid receptor CB2 phosphorylation by the inverse agonist SR 144528. Implications for receptor biological responses.</title>
        <authorList>
            <person name="Bouaboula M."/>
            <person name="Dussossoy D."/>
            <person name="Casellas P."/>
        </authorList>
    </citation>
    <scope>PHOSPHORYLATION AT SER-352</scope>
    <scope>SUBCELLULAR LOCATION</scope>
</reference>
<reference key="11">
    <citation type="journal article" date="1999" name="Mol. Pharmacol.">
        <title>Role of a conserved lysine residue in the peripheral cannabinoid receptor (CB2): evidence for subtype specificity.</title>
        <authorList>
            <person name="Tao Q."/>
            <person name="McAllister S.D."/>
            <person name="Andreassi J."/>
            <person name="Nowell K.W."/>
            <person name="Cabral G.A."/>
            <person name="Hurst D.P."/>
            <person name="Bachtel K."/>
            <person name="Ekman M.C."/>
            <person name="Reggio P.H."/>
            <person name="Abood M.E."/>
        </authorList>
    </citation>
    <scope>FUNCTION</scope>
    <scope>MUTAGENESIS OF LYS-109 AND SER-112</scope>
</reference>
<reference key="12">
    <citation type="journal article" date="2000" name="J. Biol. Chem.">
        <title>Evidence that 2-arachidonoylglycerol but not N-palmitoylethanolamine or anandamide is the physiological ligand for the cannabinoid CB2 receptor. Comparison of the agonistic activities of various cannabinoid receptor ligands in HL-60 cells.</title>
        <authorList>
            <person name="Sugiura T."/>
            <person name="Kondo S."/>
            <person name="Kishimoto S."/>
            <person name="Miyashita T."/>
            <person name="Nakane S."/>
            <person name="Kodaka T."/>
            <person name="Suhara Y."/>
            <person name="Takayama H."/>
            <person name="Waku K."/>
        </authorList>
    </citation>
    <scope>IDENTIFICATION OF 2-ARACHIDONOYLGLYCEROL AS AN ENDOGENOUS LIGAND</scope>
</reference>
<reference key="13">
    <citation type="journal article" date="2002" name="Eur. J. Biochem.">
        <title>Presence and regulation of the endocannabinoid system in human dendritic cells.</title>
        <authorList>
            <person name="Matias I."/>
            <person name="Pochard P."/>
            <person name="Orlando P."/>
            <person name="Salzet M."/>
            <person name="Pestel J."/>
            <person name="Di Marzo V."/>
        </authorList>
    </citation>
    <scope>TISSUE SPECIFICITY</scope>
</reference>
<reference key="14">
    <citation type="journal article" date="2002" name="FEBS Lett.">
        <title>Absence of a conserved proline and presence of a conserved tyrosine in the CB2 cannabinoid receptor are crucial for its function.</title>
        <authorList>
            <person name="Song Z.H."/>
            <person name="Feng W."/>
        </authorList>
    </citation>
    <scope>MUTAGENESIS OF LEU-201 AND TYR-207</scope>
</reference>
<reference key="15">
    <citation type="journal article" date="2003" name="Biochem. Pharmacol.">
        <title>Effects of D3.49A, R3.50A, and A6.34E mutations on ligand binding and activation of the cannabinoid-2 (CB2) receptor.</title>
        <authorList>
            <person name="Feng W."/>
            <person name="Song Z.H."/>
        </authorList>
    </citation>
    <scope>FUNCTION</scope>
    <scope>SUBCELLULAR LOCATION</scope>
    <scope>MUTAGENESIS OF ASP-130; ARG-131 AND ALA-244</scope>
</reference>
<reference key="16">
    <citation type="journal article" date="2003" name="J. Biol. Chem.">
        <title>2-arachidonoylglycerol induces the migration of HL-60 cells differentiated into macrophage-like cells and human peripheral blood monocytes through the cannabinoid CB2 receptor-dependent mechanism.</title>
        <authorList>
            <person name="Kishimoto S."/>
            <person name="Gokoh M."/>
            <person name="Oka S."/>
            <person name="Muramatsu M."/>
            <person name="Kajiwara T."/>
            <person name="Waku K."/>
            <person name="Sugiura T."/>
        </authorList>
    </citation>
    <scope>FUNCTION</scope>
</reference>
<reference key="17">
    <citation type="journal article" date="2003" name="J. Clin. Invest.">
        <title>Inhibition of skin tumor growth and angiogenesis in vivo by activation of cannabinoid receptors.</title>
        <authorList>
            <person name="Casanova M.L."/>
            <person name="Blazquez C."/>
            <person name="Martinez-Palacio J."/>
            <person name="Villanueva C."/>
            <person name="Fernandez-Acenero M.J."/>
            <person name="Huffman J.W."/>
            <person name="Jorcano J.L."/>
            <person name="Guzman M."/>
        </authorList>
    </citation>
    <scope>TISSUE SPECIFICITY</scope>
</reference>
<reference key="18">
    <citation type="journal article" date="2003" name="J. Neurosci.">
        <title>Cannabinoid CB2 receptors and fatty acid amide hydrolase are selectively overexpressed in neuritic plaque-associated glia in Alzheimer's disease brains.</title>
        <authorList>
            <person name="Benito C."/>
            <person name="Nunez E."/>
            <person name="Tolon R.M."/>
            <person name="Carrier E.J."/>
            <person name="Rabano A."/>
            <person name="Hillard C.J."/>
            <person name="Romero J."/>
        </authorList>
    </citation>
    <scope>TISSUE SPECIFICITY</scope>
</reference>
<reference key="19">
    <citation type="journal article" date="2004" name="Synapse">
        <title>Cannabinoid CB2 receptors are expressed by perivascular microglial cells in the human brain: an immunohistochemical study.</title>
        <authorList>
            <person name="Nunez E."/>
            <person name="Benito C."/>
            <person name="Pazos M.R."/>
            <person name="Barbachano A."/>
            <person name="Fajardo O."/>
            <person name="Gonzalez S."/>
            <person name="Tolon R.M."/>
            <person name="Romero J."/>
        </authorList>
    </citation>
    <scope>TISSUE SPECIFICITY</scope>
</reference>
<reference key="20">
    <citation type="journal article" date="2008" name="Pain">
        <title>Cannabinoid receptor CB2 localisation and agonist-mediated inhibition of capsaicin responses in human sensory neurons.</title>
        <authorList>
            <person name="Anand U."/>
            <person name="Otto W.R."/>
            <person name="Sanchez-Herrera D."/>
            <person name="Facer P."/>
            <person name="Yiangou Y."/>
            <person name="Korchev Y."/>
            <person name="Birch R."/>
            <person name="Benham C."/>
            <person name="Bountra C."/>
            <person name="Chessell I.P."/>
            <person name="Anand P."/>
        </authorList>
    </citation>
    <scope>FUNCTION</scope>
    <scope>TISSUE SPECIFICITY</scope>
</reference>
<reference key="21">
    <citation type="journal article" date="2013" name="Nat. Med.">
        <title>Activation of the Nlrp3 inflammasome in infiltrating macrophages by endocannabinoids mediates beta cell loss in type 2 diabetes.</title>
        <authorList>
            <person name="Jourdan T."/>
            <person name="Godlewski G."/>
            <person name="Cinar R."/>
            <person name="Bertola A."/>
            <person name="Szanda G."/>
            <person name="Liu J."/>
            <person name="Tam J."/>
            <person name="Han T."/>
            <person name="Mukhopadhyay B."/>
            <person name="Skarulis M.C."/>
            <person name="Ju C."/>
            <person name="Aouadi M."/>
            <person name="Czech M.P."/>
            <person name="Kunos G."/>
        </authorList>
    </citation>
    <scope>INDUCTION BY ENDOCANNABINOID ANANDAMIDE</scope>
</reference>
<reference key="22">
    <citation type="journal article" date="2009" name="Biochem. Biophys. Res. Commun.">
        <title>Structural biology of human cannabinoid receptor-2 helix 6 in membrane-mimetic environments.</title>
        <authorList>
            <person name="Tiburu E.K."/>
            <person name="Tyukhtenko S."/>
            <person name="Deshmukh L."/>
            <person name="Vinogradova O."/>
            <person name="Janero D.R."/>
            <person name="Makriyannis A."/>
        </authorList>
    </citation>
    <scope>STRUCTURE BY NMR OF 240-272</scope>
</reference>
<reference key="23">
    <citation type="journal article" date="2008" name="PLoS ONE">
        <title>Brain neuronal CB2 cannabinoid receptors in drug abuse and depression: from mice to human subjects.</title>
        <authorList>
            <person name="Onaivi E.S."/>
            <person name="Ishiguro H."/>
            <person name="Gong J.-P."/>
            <person name="Patel S."/>
            <person name="Meozzi P.A."/>
            <person name="Myers L."/>
            <person name="Perchuk A."/>
            <person name="Mora Z."/>
            <person name="Tagliaferro P.A."/>
            <person name="Gardner E."/>
            <person name="Brusco A."/>
            <person name="Akinshola B.E."/>
            <person name="Hope B."/>
            <person name="Lujilde J."/>
            <person name="Inada T."/>
            <person name="Iwasaki S."/>
            <person name="Macharia D."/>
            <person name="Teasenfitz L."/>
            <person name="Arinami T."/>
            <person name="Uhl G.R."/>
        </authorList>
    </citation>
    <scope>VARIANTS ARG-63 AND TYR-316</scope>
</reference>
<feature type="chain" id="PRO_0000069323" description="Cannabinoid receptor 2">
    <location>
        <begin position="1"/>
        <end position="360"/>
    </location>
</feature>
<feature type="topological domain" description="Extracellular" evidence="3">
    <location>
        <begin position="1"/>
        <end position="33"/>
    </location>
</feature>
<feature type="transmembrane region" description="Helical; Name=1" evidence="3">
    <location>
        <begin position="34"/>
        <end position="59"/>
    </location>
</feature>
<feature type="topological domain" description="Cytoplasmic" evidence="3">
    <location>
        <begin position="60"/>
        <end position="71"/>
    </location>
</feature>
<feature type="transmembrane region" description="Helical; Name=2" evidence="3">
    <location>
        <begin position="72"/>
        <end position="92"/>
    </location>
</feature>
<feature type="topological domain" description="Extracellular" evidence="3">
    <location>
        <begin position="93"/>
        <end position="104"/>
    </location>
</feature>
<feature type="transmembrane region" description="Helical; Name=3" evidence="3">
    <location>
        <begin position="105"/>
        <end position="129"/>
    </location>
</feature>
<feature type="topological domain" description="Cytoplasmic" evidence="3">
    <location>
        <begin position="130"/>
        <end position="149"/>
    </location>
</feature>
<feature type="transmembrane region" description="Helical; Name=4" evidence="3">
    <location>
        <begin position="150"/>
        <end position="172"/>
    </location>
</feature>
<feature type="topological domain" description="Extracellular" evidence="3">
    <location>
        <begin position="173"/>
        <end position="188"/>
    </location>
</feature>
<feature type="transmembrane region" description="Helical; Name=5" evidence="3">
    <location>
        <begin position="189"/>
        <end position="214"/>
    </location>
</feature>
<feature type="topological domain" description="Cytoplasmic" evidence="3">
    <location>
        <begin position="215"/>
        <end position="246"/>
    </location>
</feature>
<feature type="transmembrane region" description="Helical; Name=6" evidence="3">
    <location>
        <begin position="247"/>
        <end position="267"/>
    </location>
</feature>
<feature type="topological domain" description="Extracellular" evidence="3">
    <location>
        <begin position="268"/>
        <end position="279"/>
    </location>
</feature>
<feature type="transmembrane region" description="Helical; Name=7" evidence="3">
    <location>
        <begin position="280"/>
        <end position="301"/>
    </location>
</feature>
<feature type="topological domain" description="Cytoplasmic" evidence="3">
    <location>
        <begin position="302"/>
        <end position="360"/>
    </location>
</feature>
<feature type="region of interest" description="Disordered" evidence="5">
    <location>
        <begin position="327"/>
        <end position="360"/>
    </location>
</feature>
<feature type="compositionally biased region" description="Basic and acidic residues" evidence="5">
    <location>
        <begin position="351"/>
        <end position="360"/>
    </location>
</feature>
<feature type="modified residue" description="Phosphoserine" evidence="2">
    <location>
        <position position="335"/>
    </location>
</feature>
<feature type="modified residue" description="Phosphoserine" evidence="2">
    <location>
        <position position="336"/>
    </location>
</feature>
<feature type="modified residue" description="Phosphothreonine" evidence="2">
    <location>
        <position position="338"/>
    </location>
</feature>
<feature type="modified residue" description="Phosphoserine" evidence="7">
    <location>
        <position position="352"/>
    </location>
</feature>
<feature type="glycosylation site" description="N-linked (GlcNAc...) asparagine" evidence="3">
    <location>
        <position position="11"/>
    </location>
</feature>
<feature type="sequence variant" id="VAR_054310" description="High incidence in Japanese depressed subjects; dbSNP:rs2501432." evidence="15 16">
    <original>Q</original>
    <variation>R</variation>
    <location>
        <position position="63"/>
    </location>
</feature>
<feature type="sequence variant" id="VAR_029209" description="In dbSNP:rs2229579." evidence="15 16 21">
    <original>H</original>
    <variation>Y</variation>
    <location>
        <position position="316"/>
    </location>
</feature>
<feature type="mutagenesis site" description="No effect on agonist binding. Affects cannabinoid agonist binding; when associated with G-112." evidence="6">
    <original>K</original>
    <variation>A</variation>
    <location>
        <position position="109"/>
    </location>
</feature>
<feature type="mutagenesis site" description="No effect on agonist binding." evidence="6">
    <original>K</original>
    <variation>R</variation>
    <location>
        <position position="109"/>
    </location>
</feature>
<feature type="mutagenesis site" description="Affects cannabinoid agonist binding; when associated with A-109." evidence="6">
    <original>S</original>
    <variation>G</variation>
    <location>
        <position position="112"/>
    </location>
</feature>
<feature type="mutagenesis site" description="Loss of ligand binding. Alters agonist-induced inhibitory effect on adenylate cyclase." evidence="11">
    <original>D</original>
    <variation>A</variation>
    <location>
        <position position="130"/>
    </location>
</feature>
<feature type="mutagenesis site" description="No effect on ligand binding. Alters agonist-induced inhibitory effect on adenylate cyclase." evidence="11">
    <original>R</original>
    <variation>A</variation>
    <location>
        <position position="131"/>
    </location>
</feature>
<feature type="mutagenesis site" description="Abolishes ligand binding and agonist-induced inhibitory effect on adenylate cyclase." evidence="9">
    <original>L</original>
    <variation>P</variation>
    <location>
        <position position="201"/>
    </location>
</feature>
<feature type="mutagenesis site" description="Abolishes agonist-induced inhibitory effect on adenylate cyclase. No effect on ligand binding." evidence="9">
    <original>Y</original>
    <variation>A</variation>
    <location>
        <position position="207"/>
    </location>
</feature>
<feature type="mutagenesis site" description="Loss of ligand binding. Alters agonist-induced inhibitory effect on adenylate cyclase." evidence="11">
    <original>A</original>
    <variation>E</variation>
    <location>
        <position position="244"/>
    </location>
</feature>
<feature type="sequence conflict" description="In Ref. 8; AAH95545." evidence="22" ref="8">
    <original>T</original>
    <variation>A</variation>
    <location>
        <position position="173"/>
    </location>
</feature>
<feature type="sequence conflict" description="In Ref. 8; AAH69722." evidence="22" ref="8">
    <original>R</original>
    <variation>H</variation>
    <location>
        <position position="307"/>
    </location>
</feature>
<feature type="helix" evidence="23">
    <location>
        <begin position="22"/>
        <end position="24"/>
    </location>
</feature>
<feature type="helix" evidence="23">
    <location>
        <begin position="31"/>
        <end position="60"/>
    </location>
</feature>
<feature type="helix" evidence="23">
    <location>
        <begin position="62"/>
        <end position="65"/>
    </location>
</feature>
<feature type="helix" evidence="23">
    <location>
        <begin position="68"/>
        <end position="94"/>
    </location>
</feature>
<feature type="turn" evidence="26">
    <location>
        <begin position="95"/>
        <end position="97"/>
    </location>
</feature>
<feature type="helix" evidence="23">
    <location>
        <begin position="103"/>
        <end position="136"/>
    </location>
</feature>
<feature type="helix" evidence="23">
    <location>
        <begin position="138"/>
        <end position="144"/>
    </location>
</feature>
<feature type="helix" evidence="23">
    <location>
        <begin position="147"/>
        <end position="165"/>
    </location>
</feature>
<feature type="helix" evidence="23">
    <location>
        <begin position="168"/>
        <end position="170"/>
    </location>
</feature>
<feature type="strand" evidence="23">
    <location>
        <begin position="175"/>
        <end position="177"/>
    </location>
</feature>
<feature type="strand" evidence="23">
    <location>
        <begin position="181"/>
        <end position="183"/>
    </location>
</feature>
<feature type="helix" evidence="23">
    <location>
        <begin position="188"/>
        <end position="219"/>
    </location>
</feature>
<feature type="helix" evidence="24">
    <location>
        <begin position="220"/>
        <end position="223"/>
    </location>
</feature>
<feature type="turn" evidence="24">
    <location>
        <begin position="224"/>
        <end position="226"/>
    </location>
</feature>
<feature type="helix" evidence="25">
    <location>
        <begin position="230"/>
        <end position="233"/>
    </location>
</feature>
<feature type="helix" evidence="23">
    <location>
        <begin position="238"/>
        <end position="270"/>
    </location>
</feature>
<feature type="helix" evidence="23">
    <location>
        <begin position="275"/>
        <end position="284"/>
    </location>
</feature>
<feature type="helix" evidence="23">
    <location>
        <begin position="287"/>
        <end position="302"/>
    </location>
</feature>
<feature type="helix" evidence="23">
    <location>
        <begin position="304"/>
        <end position="318"/>
    </location>
</feature>
<evidence type="ECO:0000250" key="1"/>
<evidence type="ECO:0000250" key="2">
    <source>
        <dbReference type="UniProtKB" id="P47936"/>
    </source>
</evidence>
<evidence type="ECO:0000255" key="3"/>
<evidence type="ECO:0000255" key="4">
    <source>
        <dbReference type="PROSITE-ProRule" id="PRU00521"/>
    </source>
</evidence>
<evidence type="ECO:0000256" key="5">
    <source>
        <dbReference type="SAM" id="MobiDB-lite"/>
    </source>
</evidence>
<evidence type="ECO:0000269" key="6">
    <source>
    </source>
</evidence>
<evidence type="ECO:0000269" key="7">
    <source>
    </source>
</evidence>
<evidence type="ECO:0000269" key="8">
    <source>
    </source>
</evidence>
<evidence type="ECO:0000269" key="9">
    <source>
    </source>
</evidence>
<evidence type="ECO:0000269" key="10">
    <source>
    </source>
</evidence>
<evidence type="ECO:0000269" key="11">
    <source>
    </source>
</evidence>
<evidence type="ECO:0000269" key="12">
    <source>
    </source>
</evidence>
<evidence type="ECO:0000269" key="13">
    <source>
    </source>
</evidence>
<evidence type="ECO:0000269" key="14">
    <source>
    </source>
</evidence>
<evidence type="ECO:0000269" key="15">
    <source>
    </source>
</evidence>
<evidence type="ECO:0000269" key="16">
    <source>
    </source>
</evidence>
<evidence type="ECO:0000269" key="17">
    <source>
    </source>
</evidence>
<evidence type="ECO:0000269" key="18">
    <source>
    </source>
</evidence>
<evidence type="ECO:0000269" key="19">
    <source>
    </source>
</evidence>
<evidence type="ECO:0000269" key="20">
    <source>
    </source>
</evidence>
<evidence type="ECO:0000269" key="21">
    <source ref="5"/>
</evidence>
<evidence type="ECO:0000305" key="22"/>
<evidence type="ECO:0007829" key="23">
    <source>
        <dbReference type="PDB" id="5ZTY"/>
    </source>
</evidence>
<evidence type="ECO:0007829" key="24">
    <source>
        <dbReference type="PDB" id="6KPF"/>
    </source>
</evidence>
<evidence type="ECO:0007829" key="25">
    <source>
        <dbReference type="PDB" id="6PT0"/>
    </source>
</evidence>
<evidence type="ECO:0007829" key="26">
    <source>
        <dbReference type="PDB" id="8GUT"/>
    </source>
</evidence>
<proteinExistence type="evidence at protein level"/>
<keyword id="KW-0002">3D-structure</keyword>
<keyword id="KW-1003">Cell membrane</keyword>
<keyword id="KW-0966">Cell projection</keyword>
<keyword id="KW-0297">G-protein coupled receptor</keyword>
<keyword id="KW-0325">Glycoprotein</keyword>
<keyword id="KW-0395">Inflammatory response</keyword>
<keyword id="KW-0472">Membrane</keyword>
<keyword id="KW-0597">Phosphoprotein</keyword>
<keyword id="KW-1267">Proteomics identification</keyword>
<keyword id="KW-0675">Receptor</keyword>
<keyword id="KW-1185">Reference proteome</keyword>
<keyword id="KW-0807">Transducer</keyword>
<keyword id="KW-0812">Transmembrane</keyword>
<keyword id="KW-1133">Transmembrane helix</keyword>